<sequence>MSIENLKEALPEYAKDLKLNLGTVARGTVLSQSQLWGTLVATAAATRNEQVFKEIREEAAGILTPEALDAALGAASIMAMTNVFYRGRGFLDGAYDDLRPGLRMNIIGNPGVDKSEFELWSFAVSTINGCHYCVGSHEKVLREAGLTREQVLEALKIAAIVAGVAQALATVPALV</sequence>
<proteinExistence type="inferred from homology"/>
<dbReference type="EC" id="1.11.1.28" evidence="2"/>
<dbReference type="EMBL" id="CU458896">
    <property type="protein sequence ID" value="CAM64477.1"/>
    <property type="molecule type" value="Genomic_DNA"/>
</dbReference>
<dbReference type="RefSeq" id="WP_005064032.1">
    <property type="nucleotide sequence ID" value="NZ_MLCG01000001.1"/>
</dbReference>
<dbReference type="SMR" id="B1MJX0"/>
<dbReference type="GeneID" id="93381352"/>
<dbReference type="KEGG" id="mab:MAB_4407c"/>
<dbReference type="Proteomes" id="UP000007137">
    <property type="component" value="Chromosome"/>
</dbReference>
<dbReference type="GO" id="GO:0008785">
    <property type="term" value="F:alkyl hydroperoxide reductase activity"/>
    <property type="evidence" value="ECO:0007669"/>
    <property type="project" value="UniProtKB-UniRule"/>
</dbReference>
<dbReference type="GO" id="GO:0015036">
    <property type="term" value="F:disulfide oxidoreductase activity"/>
    <property type="evidence" value="ECO:0007669"/>
    <property type="project" value="TreeGrafter"/>
</dbReference>
<dbReference type="GO" id="GO:0032843">
    <property type="term" value="F:hydroperoxide reductase activity"/>
    <property type="evidence" value="ECO:0007669"/>
    <property type="project" value="InterPro"/>
</dbReference>
<dbReference type="GO" id="GO:0051920">
    <property type="term" value="F:peroxiredoxin activity"/>
    <property type="evidence" value="ECO:0007669"/>
    <property type="project" value="InterPro"/>
</dbReference>
<dbReference type="GO" id="GO:0045454">
    <property type="term" value="P:cell redox homeostasis"/>
    <property type="evidence" value="ECO:0007669"/>
    <property type="project" value="TreeGrafter"/>
</dbReference>
<dbReference type="GO" id="GO:0006979">
    <property type="term" value="P:response to oxidative stress"/>
    <property type="evidence" value="ECO:0007669"/>
    <property type="project" value="InterPro"/>
</dbReference>
<dbReference type="Gene3D" id="1.20.1290.10">
    <property type="entry name" value="AhpD-like"/>
    <property type="match status" value="1"/>
</dbReference>
<dbReference type="HAMAP" id="MF_01676">
    <property type="entry name" value="AhpD"/>
    <property type="match status" value="1"/>
</dbReference>
<dbReference type="InterPro" id="IPR004674">
    <property type="entry name" value="AhpD"/>
</dbReference>
<dbReference type="InterPro" id="IPR029032">
    <property type="entry name" value="AhpD-like"/>
</dbReference>
<dbReference type="InterPro" id="IPR004675">
    <property type="entry name" value="AhpD_core"/>
</dbReference>
<dbReference type="InterPro" id="IPR003779">
    <property type="entry name" value="CMD-like"/>
</dbReference>
<dbReference type="NCBIfam" id="TIGR00777">
    <property type="entry name" value="ahpD"/>
    <property type="match status" value="1"/>
</dbReference>
<dbReference type="NCBIfam" id="TIGR00778">
    <property type="entry name" value="ahpD_dom"/>
    <property type="match status" value="1"/>
</dbReference>
<dbReference type="PANTHER" id="PTHR33930">
    <property type="entry name" value="ALKYL HYDROPEROXIDE REDUCTASE AHPD"/>
    <property type="match status" value="1"/>
</dbReference>
<dbReference type="PANTHER" id="PTHR33930:SF7">
    <property type="entry name" value="ALKYL HYDROPEROXIDE REDUCTASE AHPD"/>
    <property type="match status" value="1"/>
</dbReference>
<dbReference type="Pfam" id="PF02627">
    <property type="entry name" value="CMD"/>
    <property type="match status" value="1"/>
</dbReference>
<dbReference type="SUPFAM" id="SSF69118">
    <property type="entry name" value="AhpD-like"/>
    <property type="match status" value="1"/>
</dbReference>
<feature type="chain" id="PRO_0000359495" description="Alkyl hydroperoxide reductase AhpD">
    <location>
        <begin position="1"/>
        <end position="175"/>
    </location>
</feature>
<feature type="active site" description="Proton donor" evidence="2">
    <location>
        <position position="130"/>
    </location>
</feature>
<feature type="active site" description="Cysteine sulfenic acid (-SOH) intermediate" evidence="2">
    <location>
        <position position="133"/>
    </location>
</feature>
<feature type="disulfide bond" evidence="1">
    <location>
        <begin position="130"/>
        <end position="133"/>
    </location>
</feature>
<feature type="disulfide bond" description="Interchain (with AhpC); in linked form" evidence="2">
    <location>
        <position position="133"/>
    </location>
</feature>
<protein>
    <recommendedName>
        <fullName evidence="2">Alkyl hydroperoxide reductase AhpD</fullName>
        <ecNumber evidence="2">1.11.1.28</ecNumber>
    </recommendedName>
    <alternativeName>
        <fullName evidence="2">Alkylhydroperoxidase AhpD</fullName>
    </alternativeName>
</protein>
<accession>B1MJX0</accession>
<reference key="1">
    <citation type="journal article" date="2009" name="PLoS ONE">
        <title>Non mycobacterial virulence genes in the genome of the emerging pathogen Mycobacterium abscessus.</title>
        <authorList>
            <person name="Ripoll F."/>
            <person name="Pasek S."/>
            <person name="Schenowitz C."/>
            <person name="Dossat C."/>
            <person name="Barbe V."/>
            <person name="Rottman M."/>
            <person name="Macheras E."/>
            <person name="Heym B."/>
            <person name="Herrmann J.L."/>
            <person name="Daffe M."/>
            <person name="Brosch R."/>
            <person name="Risler J.L."/>
            <person name="Gaillard J.L."/>
        </authorList>
    </citation>
    <scope>NUCLEOTIDE SEQUENCE [LARGE SCALE GENOMIC DNA]</scope>
    <source>
        <strain>ATCC 19977 / DSM 44196 / CCUG 20993 / CIP 104536 / JCM 13569 / NCTC 13031 / TMC 1543 / L948</strain>
    </source>
</reference>
<keyword id="KW-0049">Antioxidant</keyword>
<keyword id="KW-1015">Disulfide bond</keyword>
<keyword id="KW-0560">Oxidoreductase</keyword>
<keyword id="KW-0575">Peroxidase</keyword>
<keyword id="KW-0676">Redox-active center</keyword>
<keyword id="KW-1185">Reference proteome</keyword>
<evidence type="ECO:0000250" key="1"/>
<evidence type="ECO:0000255" key="2">
    <source>
        <dbReference type="HAMAP-Rule" id="MF_01676"/>
    </source>
</evidence>
<organism>
    <name type="scientific">Mycobacteroides abscessus (strain ATCC 19977 / DSM 44196 / CCUG 20993 / CIP 104536 / JCM 13569 / NCTC 13031 / TMC 1543 / L948)</name>
    <name type="common">Mycobacterium abscessus</name>
    <dbReference type="NCBI Taxonomy" id="561007"/>
    <lineage>
        <taxon>Bacteria</taxon>
        <taxon>Bacillati</taxon>
        <taxon>Actinomycetota</taxon>
        <taxon>Actinomycetes</taxon>
        <taxon>Mycobacteriales</taxon>
        <taxon>Mycobacteriaceae</taxon>
        <taxon>Mycobacteroides</taxon>
        <taxon>Mycobacteroides abscessus</taxon>
    </lineage>
</organism>
<gene>
    <name evidence="2" type="primary">ahpD</name>
    <name type="ordered locus">MAB_4407c</name>
</gene>
<name>AHPD_MYCA9</name>
<comment type="function">
    <text evidence="2">Antioxidant protein with alkyl hydroperoxidase activity. Required for the reduction of the AhpC active site cysteine residues and for the regeneration of the AhpC enzyme activity.</text>
</comment>
<comment type="catalytic activity">
    <reaction evidence="2">
        <text>N(6)-[(R)-dihydrolipoyl]-L-lysyl-[lipoyl-carrier protein] + a hydroperoxide = N(6)-[(R)-lipoyl]-L-lysyl-[lipoyl-carrier protein] + an alcohol + H2O</text>
        <dbReference type="Rhea" id="RHEA:62636"/>
        <dbReference type="Rhea" id="RHEA-COMP:10502"/>
        <dbReference type="Rhea" id="RHEA-COMP:16355"/>
        <dbReference type="ChEBI" id="CHEBI:15377"/>
        <dbReference type="ChEBI" id="CHEBI:30879"/>
        <dbReference type="ChEBI" id="CHEBI:35924"/>
        <dbReference type="ChEBI" id="CHEBI:83099"/>
        <dbReference type="ChEBI" id="CHEBI:83100"/>
        <dbReference type="EC" id="1.11.1.28"/>
    </reaction>
</comment>
<comment type="subunit">
    <text evidence="2">Homotrimer.</text>
</comment>
<comment type="similarity">
    <text evidence="2">Belongs to the AhpD family.</text>
</comment>